<sequence length="330" mass="36683">MALSVYYDKDIDLGVIQSLQVGIIGYGTQGEAQALNLRDSKVKVRVGLYQGSLSIPKAKAEGFEVLEVKELVQKSDVIMALLPDELHKEVLEKEVIPFLKEGQIVGFAHGFSVHFNQVSFKKGVGVILVAPKGPGSALREEYLKNKGLYHLIAIEQENSKNNAKAVALSYAKAMGGGRMGVLETSFKEECESDLFGEQAVLCGGLEAVVRMGFETLIKAGYPEELAYFECVHEVKLVADLLHYKGVEGLRKHISNTAEFGAIKAREPMENLLEKRMQKILKKIQNGSFAKDFLLEKSLNYPRLNTERKALKETKIEQVGEILRTPFNHEK</sequence>
<organism>
    <name type="scientific">Helicobacter acinonychis (strain Sheeba)</name>
    <dbReference type="NCBI Taxonomy" id="382638"/>
    <lineage>
        <taxon>Bacteria</taxon>
        <taxon>Pseudomonadati</taxon>
        <taxon>Campylobacterota</taxon>
        <taxon>Epsilonproteobacteria</taxon>
        <taxon>Campylobacterales</taxon>
        <taxon>Helicobacteraceae</taxon>
        <taxon>Helicobacter</taxon>
    </lineage>
</organism>
<name>ILVC_HELAH</name>
<accession>Q17X66</accession>
<protein>
    <recommendedName>
        <fullName evidence="1">Ketol-acid reductoisomerase (NADP(+))</fullName>
        <shortName evidence="1">KARI</shortName>
        <ecNumber evidence="1">1.1.1.86</ecNumber>
    </recommendedName>
    <alternativeName>
        <fullName evidence="1">Acetohydroxy-acid isomeroreductase</fullName>
        <shortName evidence="1">AHIR</shortName>
    </alternativeName>
    <alternativeName>
        <fullName evidence="1">Alpha-keto-beta-hydroxylacyl reductoisomerase</fullName>
    </alternativeName>
    <alternativeName>
        <fullName evidence="1">Ketol-acid reductoisomerase type 1</fullName>
    </alternativeName>
    <alternativeName>
        <fullName evidence="1">Ketol-acid reductoisomerase type I</fullName>
    </alternativeName>
</protein>
<comment type="function">
    <text evidence="1">Involved in the biosynthesis of branched-chain amino acids (BCAA). Catalyzes an alkyl-migration followed by a ketol-acid reduction of (S)-2-acetolactate (S2AL) to yield (R)-2,3-dihydroxy-isovalerate. In the isomerase reaction, S2AL is rearranged via a Mg-dependent methyl migration to produce 3-hydroxy-3-methyl-2-ketobutyrate (HMKB). In the reductase reaction, this 2-ketoacid undergoes a metal-dependent reduction by NADPH to yield (R)-2,3-dihydroxy-isovalerate.</text>
</comment>
<comment type="catalytic activity">
    <reaction evidence="1">
        <text>(2R)-2,3-dihydroxy-3-methylbutanoate + NADP(+) = (2S)-2-acetolactate + NADPH + H(+)</text>
        <dbReference type="Rhea" id="RHEA:22068"/>
        <dbReference type="ChEBI" id="CHEBI:15378"/>
        <dbReference type="ChEBI" id="CHEBI:49072"/>
        <dbReference type="ChEBI" id="CHEBI:57783"/>
        <dbReference type="ChEBI" id="CHEBI:58349"/>
        <dbReference type="ChEBI" id="CHEBI:58476"/>
        <dbReference type="EC" id="1.1.1.86"/>
    </reaction>
</comment>
<comment type="catalytic activity">
    <reaction evidence="1">
        <text>(2R,3R)-2,3-dihydroxy-3-methylpentanoate + NADP(+) = (S)-2-ethyl-2-hydroxy-3-oxobutanoate + NADPH + H(+)</text>
        <dbReference type="Rhea" id="RHEA:13493"/>
        <dbReference type="ChEBI" id="CHEBI:15378"/>
        <dbReference type="ChEBI" id="CHEBI:49256"/>
        <dbReference type="ChEBI" id="CHEBI:49258"/>
        <dbReference type="ChEBI" id="CHEBI:57783"/>
        <dbReference type="ChEBI" id="CHEBI:58349"/>
        <dbReference type="EC" id="1.1.1.86"/>
    </reaction>
</comment>
<comment type="cofactor">
    <cofactor evidence="1">
        <name>Mg(2+)</name>
        <dbReference type="ChEBI" id="CHEBI:18420"/>
    </cofactor>
    <text evidence="1">Binds 2 magnesium ions per subunit.</text>
</comment>
<comment type="pathway">
    <text evidence="1">Amino-acid biosynthesis; L-isoleucine biosynthesis; L-isoleucine from 2-oxobutanoate: step 2/4.</text>
</comment>
<comment type="pathway">
    <text evidence="1">Amino-acid biosynthesis; L-valine biosynthesis; L-valine from pyruvate: step 2/4.</text>
</comment>
<comment type="similarity">
    <text evidence="1">Belongs to the ketol-acid reductoisomerase family.</text>
</comment>
<proteinExistence type="inferred from homology"/>
<evidence type="ECO:0000255" key="1">
    <source>
        <dbReference type="HAMAP-Rule" id="MF_00435"/>
    </source>
</evidence>
<evidence type="ECO:0000255" key="2">
    <source>
        <dbReference type="PROSITE-ProRule" id="PRU01197"/>
    </source>
</evidence>
<evidence type="ECO:0000255" key="3">
    <source>
        <dbReference type="PROSITE-ProRule" id="PRU01198"/>
    </source>
</evidence>
<gene>
    <name evidence="1" type="primary">ilvC</name>
    <name type="ordered locus">Hac_0990</name>
</gene>
<feature type="chain" id="PRO_1000050516" description="Ketol-acid reductoisomerase (NADP(+))">
    <location>
        <begin position="1"/>
        <end position="330"/>
    </location>
</feature>
<feature type="domain" description="KARI N-terminal Rossmann" evidence="2">
    <location>
        <begin position="3"/>
        <end position="184"/>
    </location>
</feature>
<feature type="domain" description="KARI C-terminal knotted" evidence="3">
    <location>
        <begin position="185"/>
        <end position="329"/>
    </location>
</feature>
<feature type="active site" evidence="1">
    <location>
        <position position="109"/>
    </location>
</feature>
<feature type="binding site" evidence="1">
    <location>
        <begin position="26"/>
        <end position="29"/>
    </location>
    <ligand>
        <name>NADP(+)</name>
        <dbReference type="ChEBI" id="CHEBI:58349"/>
    </ligand>
</feature>
<feature type="binding site" evidence="1">
    <location>
        <position position="52"/>
    </location>
    <ligand>
        <name>NADP(+)</name>
        <dbReference type="ChEBI" id="CHEBI:58349"/>
    </ligand>
</feature>
<feature type="binding site" evidence="1">
    <location>
        <position position="54"/>
    </location>
    <ligand>
        <name>NADP(+)</name>
        <dbReference type="ChEBI" id="CHEBI:58349"/>
    </ligand>
</feature>
<feature type="binding site" evidence="1">
    <location>
        <position position="135"/>
    </location>
    <ligand>
        <name>NADP(+)</name>
        <dbReference type="ChEBI" id="CHEBI:58349"/>
    </ligand>
</feature>
<feature type="binding site" evidence="1">
    <location>
        <position position="193"/>
    </location>
    <ligand>
        <name>Mg(2+)</name>
        <dbReference type="ChEBI" id="CHEBI:18420"/>
        <label>1</label>
    </ligand>
</feature>
<feature type="binding site" evidence="1">
    <location>
        <position position="193"/>
    </location>
    <ligand>
        <name>Mg(2+)</name>
        <dbReference type="ChEBI" id="CHEBI:18420"/>
        <label>2</label>
    </ligand>
</feature>
<feature type="binding site" evidence="1">
    <location>
        <position position="197"/>
    </location>
    <ligand>
        <name>Mg(2+)</name>
        <dbReference type="ChEBI" id="CHEBI:18420"/>
        <label>1</label>
    </ligand>
</feature>
<feature type="binding site" evidence="1">
    <location>
        <position position="229"/>
    </location>
    <ligand>
        <name>Mg(2+)</name>
        <dbReference type="ChEBI" id="CHEBI:18420"/>
        <label>2</label>
    </ligand>
</feature>
<feature type="binding site" evidence="1">
    <location>
        <position position="233"/>
    </location>
    <ligand>
        <name>Mg(2+)</name>
        <dbReference type="ChEBI" id="CHEBI:18420"/>
        <label>2</label>
    </ligand>
</feature>
<feature type="binding site" evidence="1">
    <location>
        <position position="254"/>
    </location>
    <ligand>
        <name>substrate</name>
    </ligand>
</feature>
<keyword id="KW-0028">Amino-acid biosynthesis</keyword>
<keyword id="KW-0100">Branched-chain amino acid biosynthesis</keyword>
<keyword id="KW-0460">Magnesium</keyword>
<keyword id="KW-0479">Metal-binding</keyword>
<keyword id="KW-0521">NADP</keyword>
<keyword id="KW-0560">Oxidoreductase</keyword>
<reference key="1">
    <citation type="journal article" date="2006" name="PLoS Genet.">
        <title>Who ate whom? Adaptive Helicobacter genomic changes that accompanied a host jump from early humans to large felines.</title>
        <authorList>
            <person name="Eppinger M."/>
            <person name="Baar C."/>
            <person name="Linz B."/>
            <person name="Raddatz G."/>
            <person name="Lanz C."/>
            <person name="Keller H."/>
            <person name="Morelli G."/>
            <person name="Gressmann H."/>
            <person name="Achtman M."/>
            <person name="Schuster S.C."/>
        </authorList>
    </citation>
    <scope>NUCLEOTIDE SEQUENCE [LARGE SCALE GENOMIC DNA]</scope>
    <source>
        <strain>Sheeba</strain>
    </source>
</reference>
<dbReference type="EC" id="1.1.1.86" evidence="1"/>
<dbReference type="EMBL" id="AM260522">
    <property type="protein sequence ID" value="CAJ99760.1"/>
    <property type="molecule type" value="Genomic_DNA"/>
</dbReference>
<dbReference type="RefSeq" id="WP_011577870.1">
    <property type="nucleotide sequence ID" value="NC_008229.1"/>
</dbReference>
<dbReference type="SMR" id="Q17X66"/>
<dbReference type="STRING" id="382638.Hac_0990"/>
<dbReference type="GeneID" id="31758371"/>
<dbReference type="KEGG" id="hac:Hac_0990"/>
<dbReference type="eggNOG" id="COG0059">
    <property type="taxonomic scope" value="Bacteria"/>
</dbReference>
<dbReference type="HOGENOM" id="CLU_033821_0_1_7"/>
<dbReference type="OrthoDB" id="9804088at2"/>
<dbReference type="BioCyc" id="HACI382638:HAC_RS04250-MONOMER"/>
<dbReference type="UniPathway" id="UPA00047">
    <property type="reaction ID" value="UER00056"/>
</dbReference>
<dbReference type="UniPathway" id="UPA00049">
    <property type="reaction ID" value="UER00060"/>
</dbReference>
<dbReference type="Proteomes" id="UP000000775">
    <property type="component" value="Chromosome"/>
</dbReference>
<dbReference type="GO" id="GO:0005829">
    <property type="term" value="C:cytosol"/>
    <property type="evidence" value="ECO:0007669"/>
    <property type="project" value="TreeGrafter"/>
</dbReference>
<dbReference type="GO" id="GO:0004455">
    <property type="term" value="F:ketol-acid reductoisomerase activity"/>
    <property type="evidence" value="ECO:0007669"/>
    <property type="project" value="UniProtKB-UniRule"/>
</dbReference>
<dbReference type="GO" id="GO:0000287">
    <property type="term" value="F:magnesium ion binding"/>
    <property type="evidence" value="ECO:0007669"/>
    <property type="project" value="UniProtKB-UniRule"/>
</dbReference>
<dbReference type="GO" id="GO:0050661">
    <property type="term" value="F:NADP binding"/>
    <property type="evidence" value="ECO:0007669"/>
    <property type="project" value="InterPro"/>
</dbReference>
<dbReference type="GO" id="GO:0009097">
    <property type="term" value="P:isoleucine biosynthetic process"/>
    <property type="evidence" value="ECO:0007669"/>
    <property type="project" value="UniProtKB-UniRule"/>
</dbReference>
<dbReference type="GO" id="GO:0009099">
    <property type="term" value="P:L-valine biosynthetic process"/>
    <property type="evidence" value="ECO:0007669"/>
    <property type="project" value="UniProtKB-UniRule"/>
</dbReference>
<dbReference type="FunFam" id="3.40.50.720:FF:000023">
    <property type="entry name" value="Ketol-acid reductoisomerase (NADP(+))"/>
    <property type="match status" value="1"/>
</dbReference>
<dbReference type="Gene3D" id="6.10.240.10">
    <property type="match status" value="1"/>
</dbReference>
<dbReference type="Gene3D" id="3.40.50.720">
    <property type="entry name" value="NAD(P)-binding Rossmann-like Domain"/>
    <property type="match status" value="1"/>
</dbReference>
<dbReference type="HAMAP" id="MF_00435">
    <property type="entry name" value="IlvC"/>
    <property type="match status" value="1"/>
</dbReference>
<dbReference type="InterPro" id="IPR008927">
    <property type="entry name" value="6-PGluconate_DH-like_C_sf"/>
</dbReference>
<dbReference type="InterPro" id="IPR013023">
    <property type="entry name" value="KARI"/>
</dbReference>
<dbReference type="InterPro" id="IPR000506">
    <property type="entry name" value="KARI_C"/>
</dbReference>
<dbReference type="InterPro" id="IPR013116">
    <property type="entry name" value="KARI_N"/>
</dbReference>
<dbReference type="InterPro" id="IPR014359">
    <property type="entry name" value="KARI_prok"/>
</dbReference>
<dbReference type="InterPro" id="IPR036291">
    <property type="entry name" value="NAD(P)-bd_dom_sf"/>
</dbReference>
<dbReference type="NCBIfam" id="TIGR00465">
    <property type="entry name" value="ilvC"/>
    <property type="match status" value="1"/>
</dbReference>
<dbReference type="NCBIfam" id="NF004017">
    <property type="entry name" value="PRK05479.1"/>
    <property type="match status" value="1"/>
</dbReference>
<dbReference type="PANTHER" id="PTHR21371">
    <property type="entry name" value="KETOL-ACID REDUCTOISOMERASE, MITOCHONDRIAL"/>
    <property type="match status" value="1"/>
</dbReference>
<dbReference type="PANTHER" id="PTHR21371:SF1">
    <property type="entry name" value="KETOL-ACID REDUCTOISOMERASE, MITOCHONDRIAL"/>
    <property type="match status" value="1"/>
</dbReference>
<dbReference type="Pfam" id="PF01450">
    <property type="entry name" value="KARI_C"/>
    <property type="match status" value="1"/>
</dbReference>
<dbReference type="Pfam" id="PF07991">
    <property type="entry name" value="KARI_N"/>
    <property type="match status" value="1"/>
</dbReference>
<dbReference type="PIRSF" id="PIRSF000116">
    <property type="entry name" value="IlvC_gammaproteo"/>
    <property type="match status" value="1"/>
</dbReference>
<dbReference type="SUPFAM" id="SSF48179">
    <property type="entry name" value="6-phosphogluconate dehydrogenase C-terminal domain-like"/>
    <property type="match status" value="1"/>
</dbReference>
<dbReference type="SUPFAM" id="SSF51735">
    <property type="entry name" value="NAD(P)-binding Rossmann-fold domains"/>
    <property type="match status" value="1"/>
</dbReference>
<dbReference type="PROSITE" id="PS51851">
    <property type="entry name" value="KARI_C"/>
    <property type="match status" value="1"/>
</dbReference>
<dbReference type="PROSITE" id="PS51850">
    <property type="entry name" value="KARI_N"/>
    <property type="match status" value="1"/>
</dbReference>